<dbReference type="EC" id="3.1.3.48" evidence="7 9 25"/>
<dbReference type="EMBL" id="M81933">
    <property type="protein sequence ID" value="AAA58415.1"/>
    <property type="molecule type" value="mRNA"/>
</dbReference>
<dbReference type="EMBL" id="AY137580">
    <property type="protein sequence ID" value="AAN11305.1"/>
    <property type="molecule type" value="mRNA"/>
</dbReference>
<dbReference type="EMBL" id="AF527417">
    <property type="protein sequence ID" value="AAM77917.1"/>
    <property type="molecule type" value="Genomic_DNA"/>
</dbReference>
<dbReference type="EMBL" id="BC007401">
    <property type="protein sequence ID" value="AAH07401.1"/>
    <property type="molecule type" value="mRNA"/>
</dbReference>
<dbReference type="EMBL" id="BC018642">
    <property type="protein sequence ID" value="AAH18642.1"/>
    <property type="molecule type" value="mRNA"/>
</dbReference>
<dbReference type="EMBL" id="AF277722">
    <property type="protein sequence ID" value="AAG41884.1"/>
    <property type="molecule type" value="mRNA"/>
</dbReference>
<dbReference type="CCDS" id="CCDS2760.1">
    <molecule id="P30304-1"/>
</dbReference>
<dbReference type="CCDS" id="CCDS2761.1">
    <molecule id="P30304-2"/>
</dbReference>
<dbReference type="PIR" id="A41648">
    <property type="entry name" value="A41648"/>
</dbReference>
<dbReference type="RefSeq" id="NP_001780.2">
    <molecule id="P30304-1"/>
    <property type="nucleotide sequence ID" value="NM_001789.2"/>
</dbReference>
<dbReference type="RefSeq" id="NP_963861.1">
    <molecule id="P30304-2"/>
    <property type="nucleotide sequence ID" value="NM_201567.2"/>
</dbReference>
<dbReference type="RefSeq" id="XP_011532618.1">
    <property type="nucleotide sequence ID" value="XM_011534316.1"/>
</dbReference>
<dbReference type="RefSeq" id="XP_047305319.1">
    <molecule id="P30304-1"/>
    <property type="nucleotide sequence ID" value="XM_047449363.1"/>
</dbReference>
<dbReference type="RefSeq" id="XP_047305321.1">
    <molecule id="P30304-2"/>
    <property type="nucleotide sequence ID" value="XM_047449365.1"/>
</dbReference>
<dbReference type="RefSeq" id="XP_054204613.1">
    <molecule id="P30304-1"/>
    <property type="nucleotide sequence ID" value="XM_054348638.1"/>
</dbReference>
<dbReference type="RefSeq" id="XP_054204615.1">
    <molecule id="P30304-2"/>
    <property type="nucleotide sequence ID" value="XM_054348640.1"/>
</dbReference>
<dbReference type="PDB" id="1C25">
    <property type="method" value="X-ray"/>
    <property type="resolution" value="2.30 A"/>
    <property type="chains" value="A=337-496"/>
</dbReference>
<dbReference type="PDB" id="8ROZ">
    <property type="method" value="EM"/>
    <property type="resolution" value="2.70 A"/>
    <property type="chains" value="C=338-524"/>
</dbReference>
<dbReference type="PDBsum" id="1C25"/>
<dbReference type="PDBsum" id="8ROZ"/>
<dbReference type="EMDB" id="EMD-19408"/>
<dbReference type="SMR" id="P30304"/>
<dbReference type="BioGRID" id="107428">
    <property type="interactions" value="142"/>
</dbReference>
<dbReference type="DIP" id="DIP-166N"/>
<dbReference type="ELM" id="P30304"/>
<dbReference type="FunCoup" id="P30304">
    <property type="interactions" value="3046"/>
</dbReference>
<dbReference type="IntAct" id="P30304">
    <property type="interactions" value="48"/>
</dbReference>
<dbReference type="MINT" id="P30304"/>
<dbReference type="STRING" id="9606.ENSP00000303706"/>
<dbReference type="BindingDB" id="P30304"/>
<dbReference type="ChEMBL" id="CHEMBL3775"/>
<dbReference type="DrugCentral" id="P30304"/>
<dbReference type="DEPOD" id="CDC25A"/>
<dbReference type="GlyCosmos" id="P30304">
    <property type="glycosylation" value="1 site, 1 glycan"/>
</dbReference>
<dbReference type="GlyGen" id="P30304">
    <property type="glycosylation" value="4 sites, 1 O-linked glycan (3 sites)"/>
</dbReference>
<dbReference type="iPTMnet" id="P30304"/>
<dbReference type="PhosphoSitePlus" id="P30304"/>
<dbReference type="BioMuta" id="CDC25A"/>
<dbReference type="DMDM" id="50403734"/>
<dbReference type="jPOST" id="P30304"/>
<dbReference type="MassIVE" id="P30304"/>
<dbReference type="PaxDb" id="9606-ENSP00000303706"/>
<dbReference type="PeptideAtlas" id="P30304"/>
<dbReference type="ProteomicsDB" id="54652">
    <molecule id="P30304-1"/>
</dbReference>
<dbReference type="ProteomicsDB" id="54653">
    <molecule id="P30304-2"/>
</dbReference>
<dbReference type="Antibodypedia" id="1619">
    <property type="antibodies" value="1697 antibodies from 47 providers"/>
</dbReference>
<dbReference type="DNASU" id="993"/>
<dbReference type="Ensembl" id="ENST00000302506.8">
    <molecule id="P30304-1"/>
    <property type="protein sequence ID" value="ENSP00000303706.3"/>
    <property type="gene ID" value="ENSG00000164045.12"/>
</dbReference>
<dbReference type="Ensembl" id="ENST00000351231.7">
    <molecule id="P30304-2"/>
    <property type="protein sequence ID" value="ENSP00000343166.3"/>
    <property type="gene ID" value="ENSG00000164045.12"/>
</dbReference>
<dbReference type="GeneID" id="993"/>
<dbReference type="KEGG" id="hsa:993"/>
<dbReference type="MANE-Select" id="ENST00000302506.8">
    <property type="protein sequence ID" value="ENSP00000303706.3"/>
    <property type="RefSeq nucleotide sequence ID" value="NM_001789.3"/>
    <property type="RefSeq protein sequence ID" value="NP_001780.2"/>
</dbReference>
<dbReference type="UCSC" id="uc003csh.2">
    <molecule id="P30304-1"/>
    <property type="organism name" value="human"/>
</dbReference>
<dbReference type="AGR" id="HGNC:1725"/>
<dbReference type="CTD" id="993"/>
<dbReference type="DisGeNET" id="993"/>
<dbReference type="GeneCards" id="CDC25A"/>
<dbReference type="HGNC" id="HGNC:1725">
    <property type="gene designation" value="CDC25A"/>
</dbReference>
<dbReference type="HPA" id="ENSG00000164045">
    <property type="expression patterns" value="Tissue enhanced (bone marrow, lymphoid tissue, testis)"/>
</dbReference>
<dbReference type="MalaCards" id="CDC25A"/>
<dbReference type="MIM" id="116947">
    <property type="type" value="gene"/>
</dbReference>
<dbReference type="neXtProt" id="NX_P30304"/>
<dbReference type="OpenTargets" id="ENSG00000164045"/>
<dbReference type="PharmGKB" id="PA26259"/>
<dbReference type="VEuPathDB" id="HostDB:ENSG00000164045"/>
<dbReference type="eggNOG" id="KOG3772">
    <property type="taxonomic scope" value="Eukaryota"/>
</dbReference>
<dbReference type="GeneTree" id="ENSGT00940000160737"/>
<dbReference type="HOGENOM" id="CLU_014464_0_1_1"/>
<dbReference type="InParanoid" id="P30304"/>
<dbReference type="OMA" id="GTKNGLH"/>
<dbReference type="OrthoDB" id="26523at2759"/>
<dbReference type="PAN-GO" id="P30304">
    <property type="GO annotations" value="6 GO annotations based on evolutionary models"/>
</dbReference>
<dbReference type="PhylomeDB" id="P30304"/>
<dbReference type="TreeFam" id="TF101056"/>
<dbReference type="BRENDA" id="3.1.3.48">
    <property type="organism ID" value="2681"/>
</dbReference>
<dbReference type="PathwayCommons" id="P30304"/>
<dbReference type="Reactome" id="R-HSA-1362277">
    <property type="pathway name" value="Transcription of E2F targets under negative control by DREAM complex"/>
</dbReference>
<dbReference type="Reactome" id="R-HSA-156711">
    <property type="pathway name" value="Polo-like kinase mediated events"/>
</dbReference>
<dbReference type="Reactome" id="R-HSA-176187">
    <property type="pathway name" value="Activation of ATR in response to replication stress"/>
</dbReference>
<dbReference type="Reactome" id="R-HSA-5689880">
    <property type="pathway name" value="Ub-specific processing proteases"/>
</dbReference>
<dbReference type="Reactome" id="R-HSA-69202">
    <property type="pathway name" value="Cyclin E associated events during G1/S transition"/>
</dbReference>
<dbReference type="Reactome" id="R-HSA-69273">
    <property type="pathway name" value="Cyclin A/B1/B2 associated events during G2/M transition"/>
</dbReference>
<dbReference type="Reactome" id="R-HSA-69601">
    <property type="pathway name" value="Ubiquitin Mediated Degradation of Phosphorylated Cdc25A"/>
</dbReference>
<dbReference type="Reactome" id="R-HSA-69656">
    <property type="pathway name" value="Cyclin A:Cdk2-associated events at S phase entry"/>
</dbReference>
<dbReference type="Reactome" id="R-HSA-8862803">
    <property type="pathway name" value="Deregulated CDK5 triggers multiple neurodegenerative pathways in Alzheimer's disease models"/>
</dbReference>
<dbReference type="SignaLink" id="P30304"/>
<dbReference type="SIGNOR" id="P30304"/>
<dbReference type="BioGRID-ORCS" id="993">
    <property type="hits" value="65 hits in 1186 CRISPR screens"/>
</dbReference>
<dbReference type="ChiTaRS" id="CDC25A">
    <property type="organism name" value="human"/>
</dbReference>
<dbReference type="EvolutionaryTrace" id="P30304"/>
<dbReference type="GeneWiki" id="CDC25A"/>
<dbReference type="GenomeRNAi" id="993"/>
<dbReference type="Pharos" id="P30304">
    <property type="development level" value="Tchem"/>
</dbReference>
<dbReference type="PRO" id="PR:P30304"/>
<dbReference type="Proteomes" id="UP000005640">
    <property type="component" value="Chromosome 3"/>
</dbReference>
<dbReference type="RNAct" id="P30304">
    <property type="molecule type" value="protein"/>
</dbReference>
<dbReference type="Bgee" id="ENSG00000164045">
    <property type="expression patterns" value="Expressed in secondary oocyte and 135 other cell types or tissues"/>
</dbReference>
<dbReference type="ExpressionAtlas" id="P30304">
    <property type="expression patterns" value="baseline and differential"/>
</dbReference>
<dbReference type="GO" id="GO:0005737">
    <property type="term" value="C:cytoplasm"/>
    <property type="evidence" value="ECO:0000318"/>
    <property type="project" value="GO_Central"/>
</dbReference>
<dbReference type="GO" id="GO:0005829">
    <property type="term" value="C:cytosol"/>
    <property type="evidence" value="ECO:0000304"/>
    <property type="project" value="Reactome"/>
</dbReference>
<dbReference type="GO" id="GO:0005654">
    <property type="term" value="C:nucleoplasm"/>
    <property type="evidence" value="ECO:0000304"/>
    <property type="project" value="Reactome"/>
</dbReference>
<dbReference type="GO" id="GO:0005634">
    <property type="term" value="C:nucleus"/>
    <property type="evidence" value="ECO:0000318"/>
    <property type="project" value="GO_Central"/>
</dbReference>
<dbReference type="GO" id="GO:0004721">
    <property type="term" value="F:phosphoprotein phosphatase activity"/>
    <property type="evidence" value="ECO:0000314"/>
    <property type="project" value="UniProtKB"/>
</dbReference>
<dbReference type="GO" id="GO:0019901">
    <property type="term" value="F:protein kinase binding"/>
    <property type="evidence" value="ECO:0000353"/>
    <property type="project" value="UniProtKB"/>
</dbReference>
<dbReference type="GO" id="GO:0004725">
    <property type="term" value="F:protein tyrosine phosphatase activity"/>
    <property type="evidence" value="ECO:0000314"/>
    <property type="project" value="UniProt"/>
</dbReference>
<dbReference type="GO" id="GO:0051087">
    <property type="term" value="F:protein-folding chaperone binding"/>
    <property type="evidence" value="ECO:0000353"/>
    <property type="project" value="UniProtKB"/>
</dbReference>
<dbReference type="GO" id="GO:0051301">
    <property type="term" value="P:cell division"/>
    <property type="evidence" value="ECO:0007669"/>
    <property type="project" value="UniProtKB-KW"/>
</dbReference>
<dbReference type="GO" id="GO:0008283">
    <property type="term" value="P:cell population proliferation"/>
    <property type="evidence" value="ECO:0000304"/>
    <property type="project" value="UniProtKB"/>
</dbReference>
<dbReference type="GO" id="GO:0000082">
    <property type="term" value="P:G1/S transition of mitotic cell cycle"/>
    <property type="evidence" value="ECO:0000304"/>
    <property type="project" value="Reactome"/>
</dbReference>
<dbReference type="GO" id="GO:0000086">
    <property type="term" value="P:G2/M transition of mitotic cell cycle"/>
    <property type="evidence" value="ECO:0000314"/>
    <property type="project" value="UniProt"/>
</dbReference>
<dbReference type="GO" id="GO:0045740">
    <property type="term" value="P:positive regulation of DNA replication"/>
    <property type="evidence" value="ECO:0000304"/>
    <property type="project" value="Reactome"/>
</dbReference>
<dbReference type="GO" id="GO:0010971">
    <property type="term" value="P:positive regulation of G2/M transition of mitotic cell cycle"/>
    <property type="evidence" value="ECO:0000314"/>
    <property type="project" value="UniProtKB"/>
</dbReference>
<dbReference type="GO" id="GO:0110032">
    <property type="term" value="P:positive regulation of G2/MI transition of meiotic cell cycle"/>
    <property type="evidence" value="ECO:0000318"/>
    <property type="project" value="GO_Central"/>
</dbReference>
<dbReference type="GO" id="GO:0000079">
    <property type="term" value="P:regulation of cyclin-dependent protein serine/threonine kinase activity"/>
    <property type="evidence" value="ECO:0000304"/>
    <property type="project" value="ProtInc"/>
</dbReference>
<dbReference type="GO" id="GO:0009314">
    <property type="term" value="P:response to radiation"/>
    <property type="evidence" value="ECO:0000314"/>
    <property type="project" value="UniProtKB"/>
</dbReference>
<dbReference type="CDD" id="cd01530">
    <property type="entry name" value="Cdc25"/>
    <property type="match status" value="1"/>
</dbReference>
<dbReference type="FunFam" id="3.40.250.10:FF:000004">
    <property type="entry name" value="M-phase inducer phosphatase 1 isoform X1"/>
    <property type="match status" value="1"/>
</dbReference>
<dbReference type="Gene3D" id="3.40.250.10">
    <property type="entry name" value="Rhodanese-like domain"/>
    <property type="match status" value="1"/>
</dbReference>
<dbReference type="InterPro" id="IPR000751">
    <property type="entry name" value="MPI_Phosphatase"/>
</dbReference>
<dbReference type="InterPro" id="IPR001763">
    <property type="entry name" value="Rhodanese-like_dom"/>
</dbReference>
<dbReference type="InterPro" id="IPR036873">
    <property type="entry name" value="Rhodanese-like_dom_sf"/>
</dbReference>
<dbReference type="PANTHER" id="PTHR10828:SF46">
    <property type="entry name" value="M-PHASE INDUCER PHOSPHATASE 1"/>
    <property type="match status" value="1"/>
</dbReference>
<dbReference type="PANTHER" id="PTHR10828">
    <property type="entry name" value="M-PHASE INDUCER PHOSPHATASE DUAL SPECIFICITY PHOSPHATASE CDC25"/>
    <property type="match status" value="1"/>
</dbReference>
<dbReference type="Pfam" id="PF06617">
    <property type="entry name" value="M-inducer_phosp"/>
    <property type="match status" value="1"/>
</dbReference>
<dbReference type="Pfam" id="PF00581">
    <property type="entry name" value="Rhodanese"/>
    <property type="match status" value="1"/>
</dbReference>
<dbReference type="PRINTS" id="PR00716">
    <property type="entry name" value="MPIPHPHTASE"/>
</dbReference>
<dbReference type="SMART" id="SM00450">
    <property type="entry name" value="RHOD"/>
    <property type="match status" value="1"/>
</dbReference>
<dbReference type="SUPFAM" id="SSF52821">
    <property type="entry name" value="Rhodanese/Cell cycle control phosphatase"/>
    <property type="match status" value="1"/>
</dbReference>
<dbReference type="PROSITE" id="PS50206">
    <property type="entry name" value="RHODANESE_3"/>
    <property type="match status" value="1"/>
</dbReference>
<organism>
    <name type="scientific">Homo sapiens</name>
    <name type="common">Human</name>
    <dbReference type="NCBI Taxonomy" id="9606"/>
    <lineage>
        <taxon>Eukaryota</taxon>
        <taxon>Metazoa</taxon>
        <taxon>Chordata</taxon>
        <taxon>Craniata</taxon>
        <taxon>Vertebrata</taxon>
        <taxon>Euteleostomi</taxon>
        <taxon>Mammalia</taxon>
        <taxon>Eutheria</taxon>
        <taxon>Euarchontoglires</taxon>
        <taxon>Primates</taxon>
        <taxon>Haplorrhini</taxon>
        <taxon>Catarrhini</taxon>
        <taxon>Hominidae</taxon>
        <taxon>Homo</taxon>
    </lineage>
</organism>
<gene>
    <name type="primary">CDC25A</name>
</gene>
<accession>P30304</accession>
<accession>Q8IZH5</accession>
<accession>Q96IL3</accession>
<accession>Q9H2F2</accession>
<protein>
    <recommendedName>
        <fullName>M-phase inducer phosphatase 1</fullName>
        <ecNumber evidence="7 9 25">3.1.3.48</ecNumber>
    </recommendedName>
    <alternativeName>
        <fullName>Dual specificity phosphatase Cdc25A</fullName>
    </alternativeName>
</protein>
<keyword id="KW-0002">3D-structure</keyword>
<keyword id="KW-0025">Alternative splicing</keyword>
<keyword id="KW-0131">Cell cycle</keyword>
<keyword id="KW-0132">Cell division</keyword>
<keyword id="KW-0378">Hydrolase</keyword>
<keyword id="KW-0498">Mitosis</keyword>
<keyword id="KW-0597">Phosphoprotein</keyword>
<keyword id="KW-0904">Protein phosphatase</keyword>
<keyword id="KW-1267">Proteomics identification</keyword>
<keyword id="KW-1185">Reference proteome</keyword>
<keyword id="KW-0832">Ubl conjugation</keyword>
<comment type="function">
    <text evidence="7 9 12 16">Tyrosine protein phosphatase which functions as a dosage-dependent inducer of mitotic progression (PubMed:12676925, PubMed:14559997, PubMed:1836978, PubMed:20360007). Directly dephosphorylates CDK1 and stimulates its kinase activity (PubMed:20360007). Also dephosphorylates CDK2 in complex with cyclin-E, in vitro (PubMed:20360007).</text>
</comment>
<comment type="catalytic activity">
    <reaction evidence="7 9 25">
        <text>O-phospho-L-tyrosyl-[protein] + H2O = L-tyrosyl-[protein] + phosphate</text>
        <dbReference type="Rhea" id="RHEA:10684"/>
        <dbReference type="Rhea" id="RHEA-COMP:10136"/>
        <dbReference type="Rhea" id="RHEA-COMP:20101"/>
        <dbReference type="ChEBI" id="CHEBI:15377"/>
        <dbReference type="ChEBI" id="CHEBI:43474"/>
        <dbReference type="ChEBI" id="CHEBI:46858"/>
        <dbReference type="ChEBI" id="CHEBI:61978"/>
        <dbReference type="EC" id="3.1.3.48"/>
    </reaction>
    <physiologicalReaction direction="left-to-right" evidence="25">
        <dbReference type="Rhea" id="RHEA:10685"/>
    </physiologicalReaction>
</comment>
<comment type="activity regulation">
    <text evidence="11 12">Stimulated by B-type cyclins (PubMed:1836978). Stimulated by PIM1-mediated phosphorylation (PubMed:16356754).</text>
</comment>
<comment type="subunit">
    <text evidence="3 9 10 11 18">Interacts with CCNB1/cyclin B1. Interacts with YWHAE/14-3-3 epsilon when phosphorylated. Interacts with CUL1 specifically when CUL1 is neddylated and active. Interacts with BTRC/BTRCP1 and FBXW11/BTRCP2. Interactions with CUL1, BTRC and FBXW11 are enhanced upon DNA damage. Interacts with CHEK2; mediates CDC25A phosphorylation and degradation in response to infrared-induced DNA damages. Interacts with HSP90AB1; prevents heat shock-mediated CDC25A degradation and contributes to cell cycle progression (PubMed:22843495).</text>
</comment>
<comment type="interaction">
    <interactant intactId="EBI-747671">
        <id>P30304</id>
    </interactant>
    <interactant intactId="EBI-2585120">
        <id>Q9BSU3</id>
        <label>NAA11</label>
    </interactant>
    <organismsDiffer>false</organismsDiffer>
    <experiments>3</experiments>
</comment>
<comment type="interaction">
    <interactant intactId="EBI-747671">
        <id>P30304</id>
    </interactant>
    <interactant intactId="EBI-365996">
        <id>P04049</id>
        <label>RAF1</label>
    </interactant>
    <organismsDiffer>false</organismsDiffer>
    <experiments>4</experiments>
</comment>
<comment type="interaction">
    <interactant intactId="EBI-747671">
        <id>P30304</id>
    </interactant>
    <interactant intactId="EBI-359815">
        <id>P31946</id>
        <label>YWHAB</label>
    </interactant>
    <organismsDiffer>false</organismsDiffer>
    <experiments>10</experiments>
</comment>
<comment type="interaction">
    <interactant intactId="EBI-747671">
        <id>P30304</id>
    </interactant>
    <interactant intactId="EBI-356498">
        <id>P62258</id>
        <label>YWHAE</label>
    </interactant>
    <organismsDiffer>false</organismsDiffer>
    <experiments>3</experiments>
</comment>
<comment type="interaction">
    <interactant intactId="EBI-747671">
        <id>P30304</id>
    </interactant>
    <interactant intactId="EBI-359854">
        <id>P27348</id>
        <label>YWHAQ</label>
    </interactant>
    <organismsDiffer>false</organismsDiffer>
    <experiments>3</experiments>
</comment>
<comment type="interaction">
    <interactant intactId="EBI-747671">
        <id>P30304</id>
    </interactant>
    <interactant intactId="EBI-347088">
        <id>P63104</id>
        <label>YWHAZ</label>
    </interactant>
    <organismsDiffer>false</organismsDiffer>
    <experiments>3</experiments>
</comment>
<comment type="alternative products">
    <event type="alternative splicing"/>
    <isoform>
        <id>P30304-1</id>
        <name>1</name>
        <name>CDC25A1</name>
        <sequence type="displayed"/>
    </isoform>
    <isoform>
        <id>P30304-2</id>
        <name>2</name>
        <name>CDC25A2</name>
        <sequence type="described" ref="VSP_000860"/>
    </isoform>
</comment>
<comment type="domain">
    <text evidence="4">The phosphodegron motif mediates interaction with specific F-box proteins when phosphorylated. Putative phosphorylation sites at Ser-79 and Ser-82 appear to be essential for this interaction.</text>
</comment>
<comment type="PTM">
    <text evidence="3 5 6 7 8 9 10 13 14 15 17">Phosphorylated by CHEK1 on Ser-76, Ser-124, Ser-178, Ser-279, Ser-293 and Thr-507 during checkpoint mediated cell cycle arrest. Also phosphorylated by CHEK2 on Ser-124, Ser-279, and Ser-293 during checkpoint mediated cell cycle arrest. Phosphorylation on Ser-178 and Thr-507 creates binding sites for YWHAE/14-3-3 epsilon which inhibits CDC25A. Phosphorylation on Ser-76, Ser-124, Ser-178, Ser-279 and Ser-293 may also promote ubiquitin-dependent proteolysis of CDC25A by the SCF complex. Phosphorylation of CDC25A at Ser-76 by CHEK1 primes it for subsequent phosphorylation at Ser-79, Ser-82 and Ser-88 by NEK11. Phosphorylation by NEK11 is required for BTRC-mediated polyubiquitination and degradation. Phosphorylation by PIM1 leads to an increase in phosphatase activity. Phosphorylated by PLK3 following DNA damage, leading to promote its ubiquitination and degradation.</text>
</comment>
<comment type="PTM">
    <text evidence="15">Ubiquitinated by the anaphase promoting complex/cyclosome (APC/C) ubiquitin ligase complex that contains FZR1/CDH1 during G1 phase leading to its degradation by the proteasome. Ubiquitinated by a SCF complex containing BTRC and FBXW11 during S phase leading to its degradation by the proteasome. Deubiquitination by USP17L2/DUB3 leads to its stabilization.</text>
</comment>
<comment type="similarity">
    <text evidence="22">Belongs to the MPI phosphatase family.</text>
</comment>
<comment type="online information" name="Atlas of Genetics and Cytogenetics in Oncology and Haematology">
    <link uri="https://atlasgeneticsoncology.org/gene/40004/CDC25A"/>
</comment>
<reference key="1">
    <citation type="journal article" date="1991" name="Cell">
        <title>Specific activation of cdc25 tyrosine phosphatases by B-type cyclins: evidence for multiple roles of mitotic cyclins.</title>
        <authorList>
            <person name="Galaktionov K.I."/>
            <person name="Beach D."/>
        </authorList>
    </citation>
    <scope>NUCLEOTIDE SEQUENCE [MRNA] (ISOFORM 1)</scope>
    <scope>FUNCTION</scope>
    <scope>ACTIVITY REGULATION</scope>
    <scope>VARIANT GLY-182</scope>
</reference>
<reference key="2">
    <citation type="submission" date="2002-07" db="EMBL/GenBank/DDBJ databases">
        <authorList>
            <person name="Varmeh-Ziaie S."/>
            <person name="Manfredi J.J."/>
        </authorList>
    </citation>
    <scope>NUCLEOTIDE SEQUENCE [MRNA] (ISOFORM 2)</scope>
</reference>
<reference key="3">
    <citation type="submission" date="2002-07" db="EMBL/GenBank/DDBJ databases">
        <authorList>
            <consortium name="NIEHS SNPs program"/>
        </authorList>
    </citation>
    <scope>NUCLEOTIDE SEQUENCE [GENOMIC DNA]</scope>
    <scope>VARIANT PHE-88</scope>
</reference>
<reference key="4">
    <citation type="journal article" date="2004" name="Genome Res.">
        <title>The status, quality, and expansion of the NIH full-length cDNA project: the Mammalian Gene Collection (MGC).</title>
        <authorList>
            <consortium name="The MGC Project Team"/>
        </authorList>
    </citation>
    <scope>NUCLEOTIDE SEQUENCE [LARGE SCALE MRNA] (ISOFORM 1)</scope>
    <source>
        <tissue>Lymph</tissue>
    </source>
</reference>
<reference key="5">
    <citation type="journal article" date="2000" name="Eur. J. Cell Biol.">
        <title>Alternative splicing in the regulatory region of the human phosphatases CDC25A and CDC25C.</title>
        <authorList>
            <person name="Wegener S."/>
            <person name="Hampe W."/>
            <person name="Herrmann D."/>
            <person name="Schaller H.C."/>
        </authorList>
    </citation>
    <scope>NUCLEOTIDE SEQUENCE [MRNA] OF 37-234 (ISOFORM 2)</scope>
</reference>
<reference key="6">
    <citation type="journal article" date="2001" name="Nature">
        <title>The ATM-Chk2-Cdc25A checkpoint pathway guards against radioresistant DNA synthesis.</title>
        <authorList>
            <person name="Falck J."/>
            <person name="Mailand N."/>
            <person name="Syljuaasen R.G."/>
            <person name="Bartek J."/>
            <person name="Lukas J."/>
        </authorList>
    </citation>
    <scope>INTERACTION WITH CHEK2</scope>
    <scope>PHOSPHORYLATION AT SER-124 BY CHEK2</scope>
    <scope>MUTAGENESIS OF SER-124</scope>
</reference>
<reference key="7">
    <citation type="journal article" date="2002" name="EMBO J.">
        <title>Dual mode of degradation of Cdc25 A phosphatase.</title>
        <authorList>
            <person name="Donzelli M."/>
            <person name="Squatrito M."/>
            <person name="Ganoth D."/>
            <person name="Hershko A."/>
            <person name="Pagano M."/>
            <person name="Draetta G.F."/>
        </authorList>
    </citation>
    <scope>UBIQUITINATION BY THE APC/C UBIQUITIN LIGASE COMPLEX</scope>
    <scope>DOMAIN KEN BOX MOTIF</scope>
    <scope>MUTAGENESIS OF 141-LYS--ASN-143</scope>
</reference>
<reference key="8">
    <citation type="journal article" date="2002" name="Proc. Natl. Acad. Sci. U.S.A.">
        <title>Disruption of the checkpoint kinase 1/cell division cycle 25A pathway abrogates ionizing radiation-induced S and G2 checkpoints.</title>
        <authorList>
            <person name="Zhao H."/>
            <person name="Watkins J.L."/>
            <person name="Piwnica-Worms H."/>
        </authorList>
    </citation>
    <scope>PHOSPHORYLATION AT SER-124</scope>
    <scope>MUTAGENESIS OF SER-124</scope>
</reference>
<reference key="9">
    <citation type="journal article" date="2003" name="Cancer Cell">
        <title>Chk1 regulates the S phase checkpoint by coupling the physiological turnover and ionizing radiation-induced accelerated proteolysis of Cdc25A.</title>
        <authorList>
            <person name="Soerensen C.S."/>
            <person name="Syljuaesen R.G."/>
            <person name="Falck J."/>
            <person name="Schroeder T."/>
            <person name="Roennstrand L."/>
            <person name="Khanna K.K."/>
            <person name="Zhou B.-B."/>
            <person name="Bartek J."/>
            <person name="Lukas J."/>
        </authorList>
    </citation>
    <scope>PHOSPHORYLATION AT SER-124; SER-178; SER-279 AND SER-293</scope>
    <scope>MUTAGENESIS OF SER-124; SER-178; SER-279 AND SER-293</scope>
</reference>
<reference key="10">
    <citation type="journal article" date="2003" name="Genes Dev.">
        <title>SCFbeta-TRCP links Chk1 signaling to degradation of the Cdc25A protein phosphatase.</title>
        <authorList>
            <person name="Jin J."/>
            <person name="Shirogane T."/>
            <person name="Xu L."/>
            <person name="Nalepa G."/>
            <person name="Qin J."/>
            <person name="Elledge S.J."/>
            <person name="Harper J.W."/>
        </authorList>
    </citation>
    <scope>INTERACTION WITH BTRC; CUL1 AND FBXW11</scope>
    <scope>PHOSPHODEGRON MOTIF</scope>
    <scope>PHOSPHORYLATION AT SER-76 AND SER-124</scope>
    <scope>UBIQUITINATION</scope>
    <scope>MUTAGENESIS OF SER-76; SER-79; ASP-81 AND SER-82</scope>
</reference>
<reference key="11">
    <citation type="journal article" date="2003" name="J. Biol. Chem.">
        <title>Chk1 mediates S and G2 arrests through Cdc25A degradation in response to DNA-damaging agents.</title>
        <authorList>
            <person name="Xiao Z."/>
            <person name="Chen Z."/>
            <person name="Gunasekera A.H."/>
            <person name="Sowin T.J."/>
            <person name="Rosenberg S.H."/>
            <person name="Fesik S."/>
            <person name="Zhang H."/>
        </authorList>
    </citation>
    <scope>FUNCTION</scope>
    <scope>CATALYTIC ACTIVITY</scope>
    <scope>ACTIVE SITE</scope>
    <scope>PHOSPHORYLATION</scope>
    <scope>MUTAGENESIS OF CYS-431</scope>
</reference>
<reference key="12">
    <citation type="journal article" date="2003" name="J. Biol. Chem.">
        <title>Phosphorylation at serine 75 is required for UV-mediated degradation of human Cdc25A phosphatase at the S-phase checkpoint.</title>
        <authorList>
            <person name="Hassepass I."/>
            <person name="Voit R."/>
            <person name="Hoffmann I."/>
        </authorList>
    </citation>
    <scope>PHOSPHORYLATION AT SER-76; SER-124 AND SER-178</scope>
    <scope>MUTAGENESIS OF SER-76; SER-124 AND SER-178</scope>
</reference>
<reference key="13">
    <citation type="journal article" date="2003" name="Mol. Cell. Biol.">
        <title>Chk1 kinase negatively regulates mitotic function of Cdc25A phosphatase through 14-3-3 binding.</title>
        <authorList>
            <person name="Chen M.-S."/>
            <person name="Ryan C.E."/>
            <person name="Piwnica-Worms H."/>
        </authorList>
    </citation>
    <scope>FUNCTION</scope>
    <scope>CATALYTIC ACTIVITY</scope>
    <scope>ACTIVE SITE</scope>
    <scope>INTERACTION WITH CCNB1 AND YWHAE</scope>
    <scope>PHOSPHORYLATION AT SER-178 AND THR-507</scope>
    <scope>MUTAGENESIS OF SER-178; CYS-431; THR-507; LYS-514 AND ARG-520</scope>
</reference>
<reference key="14">
    <citation type="journal article" date="2006" name="Int. J. Biochem. Cell Biol.">
        <title>The oncogenic serine/threonine kinase Pim-1 directly phosphorylates and activates the G2/M specific phosphatase Cdc25C.</title>
        <authorList>
            <person name="Bachmann M."/>
            <person name="Kosan C."/>
            <person name="Xing P.X."/>
            <person name="Montenarh M."/>
            <person name="Hoffmann I."/>
            <person name="Moroy T."/>
        </authorList>
    </citation>
    <scope>ACTIVITY REGULATION</scope>
</reference>
<reference key="15">
    <citation type="journal article" date="2009" name="Nat. Cell Biol.">
        <title>NEK11 regulates CDC25A degradation and the IR-induced G2/M checkpoint.</title>
        <authorList>
            <person name="Melixetian M."/>
            <person name="Klein D.K."/>
            <person name="Soerensen C.S."/>
            <person name="Helin K."/>
        </authorList>
    </citation>
    <scope>PHOSPHORYLATION AT SER-79; SER-82 AND SER-88</scope>
</reference>
<reference key="16">
    <citation type="journal article" date="2010" name="Cell Cycle">
        <title>NEK11: linking CHK1 and CDC25A in DNA damage checkpoint signaling.</title>
        <authorList>
            <person name="Soerensen C.S."/>
            <person name="Melixetian M."/>
            <person name="Klein D.K."/>
            <person name="Helin K."/>
        </authorList>
    </citation>
    <scope>PHOSPHORYLATION AT SER-82 AND SER-88</scope>
</reference>
<reference key="17">
    <citation type="journal article" date="2010" name="J. Biol. Chem.">
        <title>Cdc25 phosphatases are required for timely assembly of CDK1-cyclin B at the G2/M transition.</title>
        <authorList>
            <person name="Timofeev O."/>
            <person name="Cizmecioglu O."/>
            <person name="Settele F."/>
            <person name="Kempf T."/>
            <person name="Hoffmann I."/>
        </authorList>
    </citation>
    <scope>FUNCTION</scope>
    <scope>CATALYTIC ACTIVITY</scope>
</reference>
<reference key="18">
    <citation type="journal article" date="2010" name="Nat. Cell Biol.">
        <title>Ubiquitin hydrolase Dub3 promotes oncogenic transformation by stabilizing Cdc25A.</title>
        <authorList>
            <person name="Pereg Y."/>
            <person name="Liu B.Y."/>
            <person name="O'Rourke K.M."/>
            <person name="Sagolla M."/>
            <person name="Dey A."/>
            <person name="Komuves L."/>
            <person name="French D.M."/>
            <person name="Dixit V.M."/>
        </authorList>
    </citation>
    <scope>DEUBIQUITINATION BY USP17L2</scope>
</reference>
<reference key="19">
    <citation type="journal article" date="2011" name="Mutat. Res.">
        <title>Absence of polo-like kinase 3 in mice stabilizes Cdc25A after DNA damage but is not sufficient to produce tumors.</title>
        <authorList>
            <person name="Myer D.L."/>
            <person name="Robbins S.B."/>
            <person name="Yin M."/>
            <person name="Boivin G.P."/>
            <person name="Liu Y."/>
            <person name="Greis K.D."/>
            <person name="Bahassi el M."/>
            <person name="Stambrook P.J."/>
        </authorList>
    </citation>
    <scope>PHOSPHORYLATION AT SER-513 AND SER-519 BY PLK3</scope>
    <scope>UBIQUITINATION</scope>
    <scope>MUTAGENESIS OF SER-513 AND SER-519</scope>
</reference>
<reference key="20">
    <citation type="journal article" date="2012" name="Hum. Mol. Genet.">
        <title>Hsp90 stabilizes Cdc25A and counteracts heat shock-mediated Cdc25A degradation and cell-cycle attenuation in pancreatic carcinoma cells.</title>
        <authorList>
            <person name="Giessrigl B."/>
            <person name="Krieger S."/>
            <person name="Rosner M."/>
            <person name="Huttary N."/>
            <person name="Saiko P."/>
            <person name="Alami M."/>
            <person name="Messaoudi S."/>
            <person name="Peyrat J.F."/>
            <person name="Maciuk A."/>
            <person name="Gollinger M."/>
            <person name="Kopf S."/>
            <person name="Kazlauskas E."/>
            <person name="Mazal P."/>
            <person name="Szekeres T."/>
            <person name="Hengstschlaeger M."/>
            <person name="Matulis D."/>
            <person name="Jaeger W."/>
            <person name="Krupitza G."/>
        </authorList>
    </citation>
    <scope>INTERACTION WITH HSP90AB1</scope>
</reference>
<reference key="21">
    <citation type="journal article" date="2013" name="J. Proteome Res.">
        <title>Toward a comprehensive characterization of a human cancer cell phosphoproteome.</title>
        <authorList>
            <person name="Zhou H."/>
            <person name="Di Palma S."/>
            <person name="Preisinger C."/>
            <person name="Peng M."/>
            <person name="Polat A.N."/>
            <person name="Heck A.J."/>
            <person name="Mohammed S."/>
        </authorList>
    </citation>
    <scope>PHOSPHORYLATION [LARGE SCALE ANALYSIS] AT SER-107 AND SER-321</scope>
    <scope>IDENTIFICATION BY MASS SPECTROMETRY [LARGE SCALE ANALYSIS]</scope>
    <source>
        <tissue>Cervix carcinoma</tissue>
        <tissue>Erythroleukemia</tissue>
    </source>
</reference>
<reference key="22">
    <citation type="journal article" date="1998" name="Cell">
        <title>Crystal structure of the catalytic domain of the human cell cycle control phosphatase, Cdc25A.</title>
        <authorList>
            <person name="Fauman E.B."/>
            <person name="Cogswell J.P."/>
            <person name="Lovejoy B."/>
            <person name="Rocque W.J."/>
            <person name="Holmes W."/>
            <person name="Montana V.G."/>
            <person name="Piwnica-Worms H."/>
            <person name="Rink M.J."/>
            <person name="Saper M.A."/>
        </authorList>
    </citation>
    <scope>X-RAY CRYSTALLOGRAPHY (2.3 ANGSTROMS) OF 336-496</scope>
</reference>
<proteinExistence type="evidence at protein level"/>
<sequence length="524" mass="59087">MELGPEPPHRRRLLFACSPPPASQPVVKALFGASAAGGLSPVTNLTVTMDQLQGLGSDYEQPLEVKNNSNLQRMGSSESTDSGFCLDSPGPLDSKENLENPMRRIHSLPQKLLGCSPALKRSHSDSLDHDIFQLIDPDENKENEAFEFKKPVRPVSRGCLHSHGLQEGKDLFTQRQNSAPARMLSSNERDSSEPGNFIPLFTPQSPVTATLSDEDDGFVDLLDGENLKNEEETPSCMASLWTAPLVMRTTNLDNRCKLFDSPSLCSSSTRSVLKRPERSQEESPPGSTKRRKSMSGASPKESTNPEKAHETLHQSLSLASSPKGTIENILDNDPRDLIGDFSKGYLFHTVAGKHQDLKYISPEIMASVLNGKFANLIKEFVIIDCRYPYEYEGGHIKGAVNLHMEEEVEDFLLKKPIVPTDGKRVIVVFHCEFSSERGPRMCRYVRERDRLGNEYPKLHYPELYVLKGGYKEFFMKCQSYCEPPSYRPMHHEDFKEDLKKFRTKSRTWAGEKSKREMYSRLKKL</sequence>
<name>MPIP1_HUMAN</name>
<evidence type="ECO:0000255" key="1">
    <source>
        <dbReference type="PROSITE-ProRule" id="PRU00173"/>
    </source>
</evidence>
<evidence type="ECO:0000256" key="2">
    <source>
        <dbReference type="SAM" id="MobiDB-lite"/>
    </source>
</evidence>
<evidence type="ECO:0000269" key="3">
    <source>
    </source>
</evidence>
<evidence type="ECO:0000269" key="4">
    <source>
    </source>
</evidence>
<evidence type="ECO:0000269" key="5">
    <source>
    </source>
</evidence>
<evidence type="ECO:0000269" key="6">
    <source>
    </source>
</evidence>
<evidence type="ECO:0000269" key="7">
    <source>
    </source>
</evidence>
<evidence type="ECO:0000269" key="8">
    <source>
    </source>
</evidence>
<evidence type="ECO:0000269" key="9">
    <source>
    </source>
</evidence>
<evidence type="ECO:0000269" key="10">
    <source>
    </source>
</evidence>
<evidence type="ECO:0000269" key="11">
    <source>
    </source>
</evidence>
<evidence type="ECO:0000269" key="12">
    <source>
    </source>
</evidence>
<evidence type="ECO:0000269" key="13">
    <source>
    </source>
</evidence>
<evidence type="ECO:0000269" key="14">
    <source>
    </source>
</evidence>
<evidence type="ECO:0000269" key="15">
    <source>
    </source>
</evidence>
<evidence type="ECO:0000269" key="16">
    <source>
    </source>
</evidence>
<evidence type="ECO:0000269" key="17">
    <source>
    </source>
</evidence>
<evidence type="ECO:0000269" key="18">
    <source>
    </source>
</evidence>
<evidence type="ECO:0000269" key="19">
    <source ref="3"/>
</evidence>
<evidence type="ECO:0000303" key="20">
    <source>
    </source>
</evidence>
<evidence type="ECO:0000303" key="21">
    <source ref="2"/>
</evidence>
<evidence type="ECO:0000305" key="22"/>
<evidence type="ECO:0000305" key="23">
    <source>
    </source>
</evidence>
<evidence type="ECO:0000305" key="24">
    <source>
    </source>
</evidence>
<evidence type="ECO:0000305" key="25">
    <source>
    </source>
</evidence>
<evidence type="ECO:0007744" key="26">
    <source>
    </source>
</evidence>
<evidence type="ECO:0007829" key="27">
    <source>
        <dbReference type="PDB" id="1C25"/>
    </source>
</evidence>
<evidence type="ECO:0007829" key="28">
    <source>
        <dbReference type="PDB" id="8ROZ"/>
    </source>
</evidence>
<feature type="chain" id="PRO_0000198641" description="M-phase inducer phosphatase 1">
    <location>
        <begin position="1"/>
        <end position="524"/>
    </location>
</feature>
<feature type="domain" description="Rhodanese" evidence="1">
    <location>
        <begin position="376"/>
        <end position="482"/>
    </location>
</feature>
<feature type="region of interest" description="Disordered" evidence="2">
    <location>
        <begin position="264"/>
        <end position="317"/>
    </location>
</feature>
<feature type="short sequence motif" description="Phosphodegron">
    <location>
        <begin position="74"/>
        <end position="84"/>
    </location>
</feature>
<feature type="short sequence motif" description="KEN box">
    <location>
        <begin position="141"/>
        <end position="143"/>
    </location>
</feature>
<feature type="compositionally biased region" description="Basic and acidic residues" evidence="2">
    <location>
        <begin position="303"/>
        <end position="312"/>
    </location>
</feature>
<feature type="active site" evidence="23 24">
    <location>
        <position position="431"/>
    </location>
</feature>
<feature type="modified residue" description="Phosphoserine; by CHEK1" evidence="8 10">
    <location>
        <position position="76"/>
    </location>
</feature>
<feature type="modified residue" description="Phosphoserine; by NEK11" evidence="13">
    <location>
        <position position="79"/>
    </location>
</feature>
<feature type="modified residue" description="Phosphoserine; by NEK11" evidence="13 14">
    <location>
        <position position="82"/>
    </location>
</feature>
<feature type="modified residue" description="Phosphoserine; by NEK11" evidence="13 14">
    <location>
        <position position="88"/>
    </location>
</feature>
<feature type="modified residue" description="Phosphoserine" evidence="26">
    <location>
        <position position="107"/>
    </location>
</feature>
<feature type="modified residue" description="Phosphoserine; by CHEK1 and CHEK2" evidence="3 5 6 8 10">
    <location>
        <position position="124"/>
    </location>
</feature>
<feature type="modified residue" description="Phosphoserine; by CHEK1" evidence="6 8 9">
    <location>
        <position position="178"/>
    </location>
</feature>
<feature type="modified residue" description="Phosphoserine; by CHEK1 and CHEK2" evidence="6">
    <location>
        <position position="279"/>
    </location>
</feature>
<feature type="modified residue" description="Phosphoserine; by CHEK1 and CHEK2" evidence="6">
    <location>
        <position position="293"/>
    </location>
</feature>
<feature type="modified residue" description="Phosphoserine" evidence="26">
    <location>
        <position position="321"/>
    </location>
</feature>
<feature type="modified residue" description="Phosphothreonine; by CHEK1" evidence="9">
    <location>
        <position position="507"/>
    </location>
</feature>
<feature type="modified residue" description="Phosphoserine; by PLK3" evidence="17">
    <location>
        <position position="513"/>
    </location>
</feature>
<feature type="modified residue" description="Phosphoserine; by PLK3" evidence="17">
    <location>
        <position position="519"/>
    </location>
</feature>
<feature type="splice variant" id="VSP_000860" description="In isoform 2." evidence="20 21">
    <location>
        <begin position="144"/>
        <end position="183"/>
    </location>
</feature>
<feature type="sequence variant" id="VAR_020932" description="In dbSNP:rs3731499." evidence="19">
    <original>S</original>
    <variation>F</variation>
    <location>
        <position position="88"/>
    </location>
</feature>
<feature type="sequence variant" id="VAR_023532" description="In dbSNP:rs6771386." evidence="12">
    <original>R</original>
    <variation>G</variation>
    <location>
        <position position="182"/>
    </location>
</feature>
<feature type="sequence variant" id="VAR_023533" description="In dbSNP:rs6771386.">
    <original>R</original>
    <variation>W</variation>
    <location>
        <position position="182"/>
    </location>
</feature>
<feature type="mutagenesis site" description="Abolishes ubiquitination and impairs CHEK1-dependent degradation following checkpoint activation." evidence="8 10">
    <original>S</original>
    <variation>A</variation>
    <location>
        <position position="76"/>
    </location>
</feature>
<feature type="mutagenesis site" description="Abrogates interactions with BTRC and FBXW11 and prevents ubiquitination." evidence="10">
    <original>S</original>
    <variation>A</variation>
    <location>
        <position position="79"/>
    </location>
</feature>
<feature type="mutagenesis site" description="Abrogates interactions with BTRC and FBXW11 and prevents ubiquitination." evidence="10">
    <original>D</original>
    <variation>A</variation>
    <location>
        <position position="81"/>
    </location>
</feature>
<feature type="mutagenesis site" description="Abrogates interactions with BTRC and FBXW11 and prevents ubiquitination." evidence="10">
    <original>S</original>
    <variation>A</variation>
    <location>
        <position position="82"/>
    </location>
</feature>
<feature type="mutagenesis site" description="Abrogates phosphorylation by CHEK2 and infrared-induced degradation. Increases basal stability and impairs CHEK1-dependent degradation following checkpoint activation; when associated with A-178; A-279 and A-293." evidence="3 5 6 8">
    <original>S</original>
    <variation>A</variation>
    <location>
        <position position="124"/>
    </location>
</feature>
<feature type="mutagenesis site" description="Prevents ubiquitination and subsequent degradation by the APC/C ubiquitin ligase complex." evidence="4">
    <original>KEN</original>
    <variation>AAA</variation>
    <location>
        <begin position="141"/>
        <end position="143"/>
    </location>
</feature>
<feature type="mutagenesis site" description="Increases basal stability and impairs CHEK1-dependent degradation following checkpoint activation; when associated with A-124; A-279 and A-293. Abrogates 14-3-3 protein binding." evidence="6 8 9">
    <original>S</original>
    <variation>A</variation>
    <location>
        <position position="178"/>
    </location>
</feature>
<feature type="mutagenesis site" description="Increases basal stability and impairs CHEK1-dependent degradation following checkpoint activation; when associated with A-124; A-178 and A-293." evidence="6">
    <original>S</original>
    <variation>A</variation>
    <location>
        <position position="279"/>
    </location>
</feature>
<feature type="mutagenesis site" description="Increases basal stability and impairs CHEK1-dependent degradation following checkpoint activation; when associated with A-124; A-178 and A-279." evidence="6">
    <original>S</original>
    <variation>A</variation>
    <location>
        <position position="293"/>
    </location>
</feature>
<feature type="mutagenesis site" description="Abolishes phosphatase activity." evidence="7 9">
    <original>C</original>
    <variation>S</variation>
    <location>
        <position position="431"/>
    </location>
</feature>
<feature type="mutagenesis site" description="Abrogates 14-3-3 protein binding; increases binding to cyclin B1." evidence="9">
    <original>T</original>
    <variation>A</variation>
    <location>
        <position position="507"/>
    </location>
</feature>
<feature type="mutagenesis site" description="Increased stability following IR treatment." evidence="17">
    <original>S</original>
    <variation>A</variation>
    <location>
        <position position="513"/>
    </location>
</feature>
<feature type="mutagenesis site" description="Mimicks phosphorylation state, leading to promote degradation following IR treatment." evidence="17">
    <original>S</original>
    <variation>D</variation>
    <location>
        <position position="513"/>
    </location>
</feature>
<feature type="mutagenesis site" description="Abrogates binding to CCNB1; when associated with L-520." evidence="9">
    <original>K</original>
    <variation>L</variation>
    <location>
        <position position="514"/>
    </location>
</feature>
<feature type="mutagenesis site" description="Increased stability following IR treatment." evidence="17">
    <original>S</original>
    <variation>A</variation>
    <location>
        <position position="519"/>
    </location>
</feature>
<feature type="mutagenesis site" description="Mimicks phosphorylation state, leading to promote degradation following IR treatment." evidence="17">
    <original>S</original>
    <variation>D</variation>
    <location>
        <position position="519"/>
    </location>
</feature>
<feature type="mutagenesis site" description="Abrogates binding to CCNB1; when associated with L-514." evidence="9">
    <original>R</original>
    <variation>L</variation>
    <location>
        <position position="520"/>
    </location>
</feature>
<feature type="sequence conflict" description="In Ref. 1; AAA58415." evidence="22" ref="1">
    <original>EPPHR</original>
    <variation>SPAP</variation>
    <location>
        <begin position="6"/>
        <end position="10"/>
    </location>
</feature>
<feature type="sequence conflict" description="In Ref. 1; AAA58415." evidence="22" ref="1">
    <original>PA</original>
    <variation>QL</variation>
    <location>
        <begin position="180"/>
        <end position="181"/>
    </location>
</feature>
<feature type="strand" evidence="27">
    <location>
        <begin position="341"/>
        <end position="344"/>
    </location>
</feature>
<feature type="strand" evidence="28">
    <location>
        <begin position="355"/>
        <end position="357"/>
    </location>
</feature>
<feature type="helix" evidence="27">
    <location>
        <begin position="362"/>
        <end position="369"/>
    </location>
</feature>
<feature type="turn" evidence="27">
    <location>
        <begin position="370"/>
        <end position="376"/>
    </location>
</feature>
<feature type="strand" evidence="27">
    <location>
        <begin position="377"/>
        <end position="384"/>
    </location>
</feature>
<feature type="helix" evidence="27">
    <location>
        <begin position="388"/>
        <end position="392"/>
    </location>
</feature>
<feature type="helix" evidence="27">
    <location>
        <begin position="405"/>
        <end position="411"/>
    </location>
</feature>
<feature type="turn" evidence="27">
    <location>
        <begin position="412"/>
        <end position="414"/>
    </location>
</feature>
<feature type="strand" evidence="27">
    <location>
        <begin position="423"/>
        <end position="430"/>
    </location>
</feature>
<feature type="strand" evidence="27">
    <location>
        <begin position="432"/>
        <end position="436"/>
    </location>
</feature>
<feature type="helix" evidence="27">
    <location>
        <begin position="437"/>
        <end position="451"/>
    </location>
</feature>
<feature type="strand" evidence="27">
    <location>
        <begin position="463"/>
        <end position="466"/>
    </location>
</feature>
<feature type="helix" evidence="27">
    <location>
        <begin position="469"/>
        <end position="477"/>
    </location>
</feature>
<feature type="helix" evidence="27">
    <location>
        <begin position="478"/>
        <end position="480"/>
    </location>
</feature>
<feature type="strand" evidence="27">
    <location>
        <begin position="481"/>
        <end position="484"/>
    </location>
</feature>
<feature type="strand" evidence="28">
    <location>
        <begin position="492"/>
        <end position="494"/>
    </location>
</feature>
<feature type="helix" evidence="28">
    <location>
        <begin position="495"/>
        <end position="521"/>
    </location>
</feature>